<proteinExistence type="inferred from homology"/>
<dbReference type="EC" id="2.6.1.9" evidence="1"/>
<dbReference type="EMBL" id="AP008934">
    <property type="protein sequence ID" value="BAE19140.1"/>
    <property type="molecule type" value="Genomic_DNA"/>
</dbReference>
<dbReference type="RefSeq" id="WP_011303654.1">
    <property type="nucleotide sequence ID" value="NZ_MTGA01000039.1"/>
</dbReference>
<dbReference type="SMR" id="Q49VS0"/>
<dbReference type="GeneID" id="3616709"/>
<dbReference type="KEGG" id="ssp:SSP1995"/>
<dbReference type="PATRIC" id="fig|342451.11.peg.1989"/>
<dbReference type="eggNOG" id="COG0079">
    <property type="taxonomic scope" value="Bacteria"/>
</dbReference>
<dbReference type="HOGENOM" id="CLU_017584_3_3_9"/>
<dbReference type="OrthoDB" id="9813612at2"/>
<dbReference type="UniPathway" id="UPA00031">
    <property type="reaction ID" value="UER00012"/>
</dbReference>
<dbReference type="Proteomes" id="UP000006371">
    <property type="component" value="Chromosome"/>
</dbReference>
<dbReference type="GO" id="GO:0004400">
    <property type="term" value="F:histidinol-phosphate transaminase activity"/>
    <property type="evidence" value="ECO:0007669"/>
    <property type="project" value="UniProtKB-UniRule"/>
</dbReference>
<dbReference type="GO" id="GO:0030170">
    <property type="term" value="F:pyridoxal phosphate binding"/>
    <property type="evidence" value="ECO:0007669"/>
    <property type="project" value="InterPro"/>
</dbReference>
<dbReference type="GO" id="GO:0000105">
    <property type="term" value="P:L-histidine biosynthetic process"/>
    <property type="evidence" value="ECO:0007669"/>
    <property type="project" value="UniProtKB-UniRule"/>
</dbReference>
<dbReference type="CDD" id="cd00609">
    <property type="entry name" value="AAT_like"/>
    <property type="match status" value="1"/>
</dbReference>
<dbReference type="Gene3D" id="3.90.1150.10">
    <property type="entry name" value="Aspartate Aminotransferase, domain 1"/>
    <property type="match status" value="1"/>
</dbReference>
<dbReference type="Gene3D" id="3.40.640.10">
    <property type="entry name" value="Type I PLP-dependent aspartate aminotransferase-like (Major domain)"/>
    <property type="match status" value="1"/>
</dbReference>
<dbReference type="HAMAP" id="MF_01023">
    <property type="entry name" value="HisC_aminotrans_2"/>
    <property type="match status" value="1"/>
</dbReference>
<dbReference type="InterPro" id="IPR001917">
    <property type="entry name" value="Aminotrans_II_pyridoxalP_BS"/>
</dbReference>
<dbReference type="InterPro" id="IPR004839">
    <property type="entry name" value="Aminotransferase_I/II_large"/>
</dbReference>
<dbReference type="InterPro" id="IPR005861">
    <property type="entry name" value="HisP_aminotrans"/>
</dbReference>
<dbReference type="InterPro" id="IPR050106">
    <property type="entry name" value="HistidinolP_aminotransfase"/>
</dbReference>
<dbReference type="InterPro" id="IPR015424">
    <property type="entry name" value="PyrdxlP-dep_Trfase"/>
</dbReference>
<dbReference type="InterPro" id="IPR015421">
    <property type="entry name" value="PyrdxlP-dep_Trfase_major"/>
</dbReference>
<dbReference type="InterPro" id="IPR015422">
    <property type="entry name" value="PyrdxlP-dep_Trfase_small"/>
</dbReference>
<dbReference type="NCBIfam" id="TIGR01141">
    <property type="entry name" value="hisC"/>
    <property type="match status" value="1"/>
</dbReference>
<dbReference type="PANTHER" id="PTHR43643:SF3">
    <property type="entry name" value="HISTIDINOL-PHOSPHATE AMINOTRANSFERASE"/>
    <property type="match status" value="1"/>
</dbReference>
<dbReference type="PANTHER" id="PTHR43643">
    <property type="entry name" value="HISTIDINOL-PHOSPHATE AMINOTRANSFERASE 2"/>
    <property type="match status" value="1"/>
</dbReference>
<dbReference type="Pfam" id="PF00155">
    <property type="entry name" value="Aminotran_1_2"/>
    <property type="match status" value="1"/>
</dbReference>
<dbReference type="SUPFAM" id="SSF53383">
    <property type="entry name" value="PLP-dependent transferases"/>
    <property type="match status" value="1"/>
</dbReference>
<dbReference type="PROSITE" id="PS00599">
    <property type="entry name" value="AA_TRANSFER_CLASS_2"/>
    <property type="match status" value="1"/>
</dbReference>
<reference key="1">
    <citation type="journal article" date="2005" name="Proc. Natl. Acad. Sci. U.S.A.">
        <title>Whole genome sequence of Staphylococcus saprophyticus reveals the pathogenesis of uncomplicated urinary tract infection.</title>
        <authorList>
            <person name="Kuroda M."/>
            <person name="Yamashita A."/>
            <person name="Hirakawa H."/>
            <person name="Kumano M."/>
            <person name="Morikawa K."/>
            <person name="Higashide M."/>
            <person name="Maruyama A."/>
            <person name="Inose Y."/>
            <person name="Matoba K."/>
            <person name="Toh H."/>
            <person name="Kuhara S."/>
            <person name="Hattori M."/>
            <person name="Ohta T."/>
        </authorList>
    </citation>
    <scope>NUCLEOTIDE SEQUENCE [LARGE SCALE GENOMIC DNA]</scope>
    <source>
        <strain>ATCC 15305 / DSM 20229 / NCIMB 8711 / NCTC 7292 / S-41</strain>
    </source>
</reference>
<sequence length="351" mass="39696">MKKQIEQLSAYEPGLSPRALKENYGIKGELHKLASNENLYGPSPKVKEAIQAHLDELQYYPETGSPLIKEAISKHLNIDPARILFGAGLDEVILMISRAVLTPGDKIVTSEMTFGQYYHNAIVESANVVQVPLQNGEFDLDGILSEIDNDTKLVWLCNPNNPTGRYFTHDALRNFLERVPSHIPVIVDEAYVEFATAKDFPDTLALQQEFENAFLLRTFSKAYGLAGMRIGYVIAAKEAIEKYNIIRPPFNVGRLSEYAALAALEDQEYLASIRERNAEEREKFFELSQSDHFYPSQTNFVFVKTDKPHELYEALLNVGCITREFPNGVRITIGFPEQNAKMREVLAQFTL</sequence>
<comment type="catalytic activity">
    <reaction evidence="1">
        <text>L-histidinol phosphate + 2-oxoglutarate = 3-(imidazol-4-yl)-2-oxopropyl phosphate + L-glutamate</text>
        <dbReference type="Rhea" id="RHEA:23744"/>
        <dbReference type="ChEBI" id="CHEBI:16810"/>
        <dbReference type="ChEBI" id="CHEBI:29985"/>
        <dbReference type="ChEBI" id="CHEBI:57766"/>
        <dbReference type="ChEBI" id="CHEBI:57980"/>
        <dbReference type="EC" id="2.6.1.9"/>
    </reaction>
</comment>
<comment type="cofactor">
    <cofactor evidence="1">
        <name>pyridoxal 5'-phosphate</name>
        <dbReference type="ChEBI" id="CHEBI:597326"/>
    </cofactor>
</comment>
<comment type="pathway">
    <text evidence="1">Amino-acid biosynthesis; L-histidine biosynthesis; L-histidine from 5-phospho-alpha-D-ribose 1-diphosphate: step 7/9.</text>
</comment>
<comment type="subunit">
    <text evidence="1">Homodimer.</text>
</comment>
<comment type="similarity">
    <text evidence="1">Belongs to the class-II pyridoxal-phosphate-dependent aminotransferase family. Histidinol-phosphate aminotransferase subfamily.</text>
</comment>
<organism>
    <name type="scientific">Staphylococcus saprophyticus subsp. saprophyticus (strain ATCC 15305 / DSM 20229 / NCIMB 8711 / NCTC 7292 / S-41)</name>
    <dbReference type="NCBI Taxonomy" id="342451"/>
    <lineage>
        <taxon>Bacteria</taxon>
        <taxon>Bacillati</taxon>
        <taxon>Bacillota</taxon>
        <taxon>Bacilli</taxon>
        <taxon>Bacillales</taxon>
        <taxon>Staphylococcaceae</taxon>
        <taxon>Staphylococcus</taxon>
    </lineage>
</organism>
<evidence type="ECO:0000255" key="1">
    <source>
        <dbReference type="HAMAP-Rule" id="MF_01023"/>
    </source>
</evidence>
<keyword id="KW-0028">Amino-acid biosynthesis</keyword>
<keyword id="KW-0032">Aminotransferase</keyword>
<keyword id="KW-0368">Histidine biosynthesis</keyword>
<keyword id="KW-0663">Pyridoxal phosphate</keyword>
<keyword id="KW-1185">Reference proteome</keyword>
<keyword id="KW-0808">Transferase</keyword>
<feature type="chain" id="PRO_0000153460" description="Histidinol-phosphate aminotransferase">
    <location>
        <begin position="1"/>
        <end position="351"/>
    </location>
</feature>
<feature type="modified residue" description="N6-(pyridoxal phosphate)lysine" evidence="1">
    <location>
        <position position="221"/>
    </location>
</feature>
<protein>
    <recommendedName>
        <fullName evidence="1">Histidinol-phosphate aminotransferase</fullName>
        <ecNumber evidence="1">2.6.1.9</ecNumber>
    </recommendedName>
    <alternativeName>
        <fullName evidence="1">Imidazole acetol-phosphate transaminase</fullName>
    </alternativeName>
</protein>
<name>HIS8_STAS1</name>
<gene>
    <name evidence="1" type="primary">hisC</name>
    <name type="ordered locus">SSP1995</name>
</gene>
<accession>Q49VS0</accession>